<sequence>MRVIGTVGMPGSGKSEAATVAANAGIPVLVMGDVIRQECRDRGLDPAQHHGRIAQALRDEHGPGAIAHQSLPIIEDHLTDATTVLVDGIRSDVEVTTFRDAFGDDFTLVHVSAPRELRKARIEDRDRPGDTDGEPLDAREDRERGFGMDDAIDLADVRIENTDSLDAFHDAVRDLLAADTPHTEVPDNHD</sequence>
<name>Y2452_HALSA</name>
<evidence type="ECO:0000255" key="1">
    <source>
        <dbReference type="HAMAP-Rule" id="MF_01111"/>
    </source>
</evidence>
<evidence type="ECO:0000256" key="2">
    <source>
        <dbReference type="SAM" id="MobiDB-lite"/>
    </source>
</evidence>
<gene>
    <name type="ordered locus">VNG_2452C</name>
</gene>
<proteinExistence type="inferred from homology"/>
<comment type="similarity">
    <text evidence="1">Belongs to the UPF0200 family.</text>
</comment>
<protein>
    <recommendedName>
        <fullName evidence="1">UPF0200 protein VNG_2452C</fullName>
    </recommendedName>
</protein>
<organism>
    <name type="scientific">Halobacterium salinarum (strain ATCC 700922 / JCM 11081 / NRC-1)</name>
    <name type="common">Halobacterium halobium</name>
    <dbReference type="NCBI Taxonomy" id="64091"/>
    <lineage>
        <taxon>Archaea</taxon>
        <taxon>Methanobacteriati</taxon>
        <taxon>Methanobacteriota</taxon>
        <taxon>Stenosarchaea group</taxon>
        <taxon>Halobacteria</taxon>
        <taxon>Halobacteriales</taxon>
        <taxon>Halobacteriaceae</taxon>
        <taxon>Halobacterium</taxon>
        <taxon>Halobacterium salinarum NRC-34001</taxon>
    </lineage>
</organism>
<dbReference type="EMBL" id="AE004437">
    <property type="protein sequence ID" value="AAG20531.1"/>
    <property type="molecule type" value="Genomic_DNA"/>
</dbReference>
<dbReference type="PIR" id="G84395">
    <property type="entry name" value="G84395"/>
</dbReference>
<dbReference type="RefSeq" id="WP_010903833.1">
    <property type="nucleotide sequence ID" value="NC_002607.1"/>
</dbReference>
<dbReference type="SMR" id="Q9HMP0"/>
<dbReference type="STRING" id="64091.VNG_2452C"/>
<dbReference type="PaxDb" id="64091-VNG_2452C"/>
<dbReference type="KEGG" id="hal:VNG_2452C"/>
<dbReference type="PATRIC" id="fig|64091.14.peg.1899"/>
<dbReference type="HOGENOM" id="CLU_096329_0_0_2"/>
<dbReference type="InParanoid" id="Q9HMP0"/>
<dbReference type="OrthoDB" id="85381at2157"/>
<dbReference type="PhylomeDB" id="Q9HMP0"/>
<dbReference type="Proteomes" id="UP000000554">
    <property type="component" value="Chromosome"/>
</dbReference>
<dbReference type="GO" id="GO:0005524">
    <property type="term" value="F:ATP binding"/>
    <property type="evidence" value="ECO:0007669"/>
    <property type="project" value="UniProtKB-UniRule"/>
</dbReference>
<dbReference type="Gene3D" id="3.40.50.300">
    <property type="entry name" value="P-loop containing nucleotide triphosphate hydrolases"/>
    <property type="match status" value="1"/>
</dbReference>
<dbReference type="HAMAP" id="MF_01111">
    <property type="entry name" value="UPF0200"/>
    <property type="match status" value="1"/>
</dbReference>
<dbReference type="InterPro" id="IPR022970">
    <property type="entry name" value="NTP_hydrolase-rel"/>
</dbReference>
<dbReference type="InterPro" id="IPR027417">
    <property type="entry name" value="P-loop_NTPase"/>
</dbReference>
<dbReference type="PANTHER" id="PTHR41930:SF1">
    <property type="entry name" value="DEPHOSPHO-COA KINASE"/>
    <property type="match status" value="1"/>
</dbReference>
<dbReference type="PANTHER" id="PTHR41930">
    <property type="entry name" value="UPF0200 PROTEIN MJ1399"/>
    <property type="match status" value="1"/>
</dbReference>
<dbReference type="Pfam" id="PF13207">
    <property type="entry name" value="AAA_17"/>
    <property type="match status" value="1"/>
</dbReference>
<dbReference type="SUPFAM" id="SSF52540">
    <property type="entry name" value="P-loop containing nucleoside triphosphate hydrolases"/>
    <property type="match status" value="1"/>
</dbReference>
<accession>Q9HMP0</accession>
<feature type="chain" id="PRO_0000094523" description="UPF0200 protein VNG_2452C">
    <location>
        <begin position="1"/>
        <end position="190"/>
    </location>
</feature>
<feature type="region of interest" description="Disordered" evidence="2">
    <location>
        <begin position="120"/>
        <end position="144"/>
    </location>
</feature>
<feature type="binding site" evidence="1">
    <location>
        <begin position="8"/>
        <end position="15"/>
    </location>
    <ligand>
        <name>ATP</name>
        <dbReference type="ChEBI" id="CHEBI:30616"/>
    </ligand>
</feature>
<reference key="1">
    <citation type="journal article" date="2000" name="Proc. Natl. Acad. Sci. U.S.A.">
        <title>Genome sequence of Halobacterium species NRC-1.</title>
        <authorList>
            <person name="Ng W.V."/>
            <person name="Kennedy S.P."/>
            <person name="Mahairas G.G."/>
            <person name="Berquist B."/>
            <person name="Pan M."/>
            <person name="Shukla H.D."/>
            <person name="Lasky S.R."/>
            <person name="Baliga N.S."/>
            <person name="Thorsson V."/>
            <person name="Sbrogna J."/>
            <person name="Swartzell S."/>
            <person name="Weir D."/>
            <person name="Hall J."/>
            <person name="Dahl T.A."/>
            <person name="Welti R."/>
            <person name="Goo Y.A."/>
            <person name="Leithauser B."/>
            <person name="Keller K."/>
            <person name="Cruz R."/>
            <person name="Danson M.J."/>
            <person name="Hough D.W."/>
            <person name="Maddocks D.G."/>
            <person name="Jablonski P.E."/>
            <person name="Krebs M.P."/>
            <person name="Angevine C.M."/>
            <person name="Dale H."/>
            <person name="Isenbarger T.A."/>
            <person name="Peck R.F."/>
            <person name="Pohlschroder M."/>
            <person name="Spudich J.L."/>
            <person name="Jung K.-H."/>
            <person name="Alam M."/>
            <person name="Freitas T."/>
            <person name="Hou S."/>
            <person name="Daniels C.J."/>
            <person name="Dennis P.P."/>
            <person name="Omer A.D."/>
            <person name="Ebhardt H."/>
            <person name="Lowe T.M."/>
            <person name="Liang P."/>
            <person name="Riley M."/>
            <person name="Hood L."/>
            <person name="DasSarma S."/>
        </authorList>
    </citation>
    <scope>NUCLEOTIDE SEQUENCE [LARGE SCALE GENOMIC DNA]</scope>
    <source>
        <strain>ATCC 700922 / JCM 11081 / NRC-1</strain>
    </source>
</reference>
<keyword id="KW-0067">ATP-binding</keyword>
<keyword id="KW-0547">Nucleotide-binding</keyword>
<keyword id="KW-1185">Reference proteome</keyword>